<feature type="chain" id="PRO_0000375728" description="Succinyl-diaminopimelate desuccinylase">
    <location>
        <begin position="1"/>
        <end position="379"/>
    </location>
</feature>
<feature type="active site" evidence="1">
    <location>
        <position position="72"/>
    </location>
</feature>
<feature type="active site" description="Proton acceptor" evidence="1">
    <location>
        <position position="137"/>
    </location>
</feature>
<feature type="binding site" evidence="1">
    <location>
        <position position="70"/>
    </location>
    <ligand>
        <name>Zn(2+)</name>
        <dbReference type="ChEBI" id="CHEBI:29105"/>
        <label>1</label>
    </ligand>
</feature>
<feature type="binding site" evidence="1">
    <location>
        <position position="103"/>
    </location>
    <ligand>
        <name>Zn(2+)</name>
        <dbReference type="ChEBI" id="CHEBI:29105"/>
        <label>1</label>
    </ligand>
</feature>
<feature type="binding site" evidence="1">
    <location>
        <position position="103"/>
    </location>
    <ligand>
        <name>Zn(2+)</name>
        <dbReference type="ChEBI" id="CHEBI:29105"/>
        <label>2</label>
    </ligand>
</feature>
<feature type="binding site" evidence="1">
    <location>
        <position position="138"/>
    </location>
    <ligand>
        <name>Zn(2+)</name>
        <dbReference type="ChEBI" id="CHEBI:29105"/>
        <label>2</label>
    </ligand>
</feature>
<feature type="binding site" evidence="1">
    <location>
        <position position="166"/>
    </location>
    <ligand>
        <name>Zn(2+)</name>
        <dbReference type="ChEBI" id="CHEBI:29105"/>
        <label>1</label>
    </ligand>
</feature>
<feature type="binding site" evidence="1">
    <location>
        <position position="352"/>
    </location>
    <ligand>
        <name>Zn(2+)</name>
        <dbReference type="ChEBI" id="CHEBI:29105"/>
        <label>2</label>
    </ligand>
</feature>
<evidence type="ECO:0000255" key="1">
    <source>
        <dbReference type="HAMAP-Rule" id="MF_01690"/>
    </source>
</evidence>
<evidence type="ECO:0000305" key="2"/>
<proteinExistence type="inferred from homology"/>
<comment type="function">
    <text evidence="1">Catalyzes the hydrolysis of N-succinyl-L,L-diaminopimelic acid (SDAP), forming succinate and LL-2,6-diaminopimelate (DAP), an intermediate involved in the bacterial biosynthesis of lysine and meso-diaminopimelic acid, an essential component of bacterial cell walls.</text>
</comment>
<comment type="catalytic activity">
    <reaction evidence="1">
        <text>N-succinyl-(2S,6S)-2,6-diaminopimelate + H2O = (2S,6S)-2,6-diaminopimelate + succinate</text>
        <dbReference type="Rhea" id="RHEA:22608"/>
        <dbReference type="ChEBI" id="CHEBI:15377"/>
        <dbReference type="ChEBI" id="CHEBI:30031"/>
        <dbReference type="ChEBI" id="CHEBI:57609"/>
        <dbReference type="ChEBI" id="CHEBI:58087"/>
        <dbReference type="EC" id="3.5.1.18"/>
    </reaction>
</comment>
<comment type="cofactor">
    <cofactor evidence="1">
        <name>Zn(2+)</name>
        <dbReference type="ChEBI" id="CHEBI:29105"/>
    </cofactor>
    <cofactor evidence="1">
        <name>Co(2+)</name>
        <dbReference type="ChEBI" id="CHEBI:48828"/>
    </cofactor>
    <text evidence="1">Binds 2 Zn(2+) or Co(2+) ions per subunit.</text>
</comment>
<comment type="pathway">
    <text evidence="1">Amino-acid biosynthesis; L-lysine biosynthesis via DAP pathway; LL-2,6-diaminopimelate from (S)-tetrahydrodipicolinate (succinylase route): step 3/3.</text>
</comment>
<comment type="subunit">
    <text evidence="1">Homodimer.</text>
</comment>
<comment type="similarity">
    <text evidence="1">Belongs to the peptidase M20A family. DapE subfamily.</text>
</comment>
<comment type="sequence caution" evidence="2">
    <conflict type="erroneous initiation">
        <sequence resource="EMBL-CDS" id="ABX49638"/>
    </conflict>
</comment>
<accession>A9L3M8</accession>
<reference key="1">
    <citation type="submission" date="2007-11" db="EMBL/GenBank/DDBJ databases">
        <title>Complete sequence of chromosome of Shewanella baltica OS195.</title>
        <authorList>
            <consortium name="US DOE Joint Genome Institute"/>
            <person name="Copeland A."/>
            <person name="Lucas S."/>
            <person name="Lapidus A."/>
            <person name="Barry K."/>
            <person name="Glavina del Rio T."/>
            <person name="Dalin E."/>
            <person name="Tice H."/>
            <person name="Pitluck S."/>
            <person name="Chain P."/>
            <person name="Malfatti S."/>
            <person name="Shin M."/>
            <person name="Vergez L."/>
            <person name="Schmutz J."/>
            <person name="Larimer F."/>
            <person name="Land M."/>
            <person name="Hauser L."/>
            <person name="Kyrpides N."/>
            <person name="Kim E."/>
            <person name="Brettar I."/>
            <person name="Rodrigues J."/>
            <person name="Konstantinidis K."/>
            <person name="Klappenbach J."/>
            <person name="Hofle M."/>
            <person name="Tiedje J."/>
            <person name="Richardson P."/>
        </authorList>
    </citation>
    <scope>NUCLEOTIDE SEQUENCE [LARGE SCALE GENOMIC DNA]</scope>
    <source>
        <strain>OS195</strain>
    </source>
</reference>
<dbReference type="EC" id="3.5.1.18" evidence="1"/>
<dbReference type="EMBL" id="CP000891">
    <property type="protein sequence ID" value="ABX49638.1"/>
    <property type="status" value="ALT_INIT"/>
    <property type="molecule type" value="Genomic_DNA"/>
</dbReference>
<dbReference type="SMR" id="A9L3M8"/>
<dbReference type="KEGG" id="sbn:Sbal195_2470"/>
<dbReference type="HOGENOM" id="CLU_021802_4_0_6"/>
<dbReference type="UniPathway" id="UPA00034">
    <property type="reaction ID" value="UER00021"/>
</dbReference>
<dbReference type="Proteomes" id="UP000000770">
    <property type="component" value="Chromosome"/>
</dbReference>
<dbReference type="GO" id="GO:0008777">
    <property type="term" value="F:acetylornithine deacetylase activity"/>
    <property type="evidence" value="ECO:0007669"/>
    <property type="project" value="TreeGrafter"/>
</dbReference>
<dbReference type="GO" id="GO:0050897">
    <property type="term" value="F:cobalt ion binding"/>
    <property type="evidence" value="ECO:0007669"/>
    <property type="project" value="UniProtKB-UniRule"/>
</dbReference>
<dbReference type="GO" id="GO:0009014">
    <property type="term" value="F:succinyl-diaminopimelate desuccinylase activity"/>
    <property type="evidence" value="ECO:0007669"/>
    <property type="project" value="UniProtKB-UniRule"/>
</dbReference>
<dbReference type="GO" id="GO:0008270">
    <property type="term" value="F:zinc ion binding"/>
    <property type="evidence" value="ECO:0007669"/>
    <property type="project" value="UniProtKB-UniRule"/>
</dbReference>
<dbReference type="GO" id="GO:0019877">
    <property type="term" value="P:diaminopimelate biosynthetic process"/>
    <property type="evidence" value="ECO:0007669"/>
    <property type="project" value="UniProtKB-UniRule"/>
</dbReference>
<dbReference type="GO" id="GO:0006526">
    <property type="term" value="P:L-arginine biosynthetic process"/>
    <property type="evidence" value="ECO:0007669"/>
    <property type="project" value="TreeGrafter"/>
</dbReference>
<dbReference type="GO" id="GO:0009089">
    <property type="term" value="P:lysine biosynthetic process via diaminopimelate"/>
    <property type="evidence" value="ECO:0007669"/>
    <property type="project" value="UniProtKB-UniRule"/>
</dbReference>
<dbReference type="CDD" id="cd03891">
    <property type="entry name" value="M20_DapE_proteobac"/>
    <property type="match status" value="1"/>
</dbReference>
<dbReference type="FunFam" id="3.30.70.360:FF:000011">
    <property type="entry name" value="Succinyl-diaminopimelate desuccinylase"/>
    <property type="match status" value="1"/>
</dbReference>
<dbReference type="FunFam" id="3.40.630.10:FF:000005">
    <property type="entry name" value="Succinyl-diaminopimelate desuccinylase"/>
    <property type="match status" value="1"/>
</dbReference>
<dbReference type="Gene3D" id="3.40.630.10">
    <property type="entry name" value="Zn peptidases"/>
    <property type="match status" value="2"/>
</dbReference>
<dbReference type="HAMAP" id="MF_01690">
    <property type="entry name" value="DapE"/>
    <property type="match status" value="1"/>
</dbReference>
<dbReference type="InterPro" id="IPR001261">
    <property type="entry name" value="ArgE/DapE_CS"/>
</dbReference>
<dbReference type="InterPro" id="IPR036264">
    <property type="entry name" value="Bact_exopeptidase_dim_dom"/>
</dbReference>
<dbReference type="InterPro" id="IPR005941">
    <property type="entry name" value="DapE_proteobac"/>
</dbReference>
<dbReference type="InterPro" id="IPR002933">
    <property type="entry name" value="Peptidase_M20"/>
</dbReference>
<dbReference type="InterPro" id="IPR011650">
    <property type="entry name" value="Peptidase_M20_dimer"/>
</dbReference>
<dbReference type="InterPro" id="IPR050072">
    <property type="entry name" value="Peptidase_M20A"/>
</dbReference>
<dbReference type="NCBIfam" id="TIGR01246">
    <property type="entry name" value="dapE_proteo"/>
    <property type="match status" value="1"/>
</dbReference>
<dbReference type="NCBIfam" id="NF009557">
    <property type="entry name" value="PRK13009.1"/>
    <property type="match status" value="1"/>
</dbReference>
<dbReference type="PANTHER" id="PTHR43808">
    <property type="entry name" value="ACETYLORNITHINE DEACETYLASE"/>
    <property type="match status" value="1"/>
</dbReference>
<dbReference type="PANTHER" id="PTHR43808:SF31">
    <property type="entry name" value="N-ACETYL-L-CITRULLINE DEACETYLASE"/>
    <property type="match status" value="1"/>
</dbReference>
<dbReference type="Pfam" id="PF07687">
    <property type="entry name" value="M20_dimer"/>
    <property type="match status" value="1"/>
</dbReference>
<dbReference type="Pfam" id="PF01546">
    <property type="entry name" value="Peptidase_M20"/>
    <property type="match status" value="1"/>
</dbReference>
<dbReference type="SUPFAM" id="SSF55031">
    <property type="entry name" value="Bacterial exopeptidase dimerisation domain"/>
    <property type="match status" value="1"/>
</dbReference>
<dbReference type="SUPFAM" id="SSF53187">
    <property type="entry name" value="Zn-dependent exopeptidases"/>
    <property type="match status" value="1"/>
</dbReference>
<dbReference type="PROSITE" id="PS00759">
    <property type="entry name" value="ARGE_DAPE_CPG2_2"/>
    <property type="match status" value="1"/>
</dbReference>
<gene>
    <name evidence="1" type="primary">dapE</name>
    <name type="ordered locus">Sbal195_2470</name>
</gene>
<keyword id="KW-0028">Amino-acid biosynthesis</keyword>
<keyword id="KW-0170">Cobalt</keyword>
<keyword id="KW-0220">Diaminopimelate biosynthesis</keyword>
<keyword id="KW-0378">Hydrolase</keyword>
<keyword id="KW-0457">Lysine biosynthesis</keyword>
<keyword id="KW-0479">Metal-binding</keyword>
<keyword id="KW-0862">Zinc</keyword>
<protein>
    <recommendedName>
        <fullName evidence="1">Succinyl-diaminopimelate desuccinylase</fullName>
        <shortName evidence="1">SDAP desuccinylase</shortName>
        <ecNumber evidence="1">3.5.1.18</ecNumber>
    </recommendedName>
    <alternativeName>
        <fullName evidence="1">N-succinyl-LL-2,6-diaminoheptanedioate amidohydrolase</fullName>
    </alternativeName>
</protein>
<organism>
    <name type="scientific">Shewanella baltica (strain OS195)</name>
    <dbReference type="NCBI Taxonomy" id="399599"/>
    <lineage>
        <taxon>Bacteria</taxon>
        <taxon>Pseudomonadati</taxon>
        <taxon>Pseudomonadota</taxon>
        <taxon>Gammaproteobacteria</taxon>
        <taxon>Alteromonadales</taxon>
        <taxon>Shewanellaceae</taxon>
        <taxon>Shewanella</taxon>
    </lineage>
</organism>
<name>DAPE_SHEB9</name>
<sequence length="379" mass="41204">MPADDYPVTELTKALIARPSVTPLDEGCQTLMAERLSAIGFNIEPMVFEDTTNMWARRGNEGPVFCFAGHTDVVPTGDVSRWHTPPFVPTIIDGYLYGRGAADMKGSLAAMIIATERFVAKHPDHHGSIAFLITSDEEGPFINGTTRVIDTLEARNEKITWALVGEPSSTLKLGDVVKNGRRGSLTGNLTVKGIQGHVAYPHLADNPIHKAAPFLAELSQMHWDNGNEFFPPTSFQIANINGGTGASNVIPGALDVMFNFRYSTEVSADILIERVEALLKAHELDYDISWIFNGLPFLTGDGPLLDATRIAIRQVTGYETDPQTTGGTSDGRFIAPTGAKVLELGPVNATIHKVNECVKVDDLEQLALCYEVILEQLLC</sequence>